<evidence type="ECO:0000255" key="1">
    <source>
        <dbReference type="HAMAP-Rule" id="MF_00358"/>
    </source>
</evidence>
<evidence type="ECO:0000305" key="2"/>
<accession>A6SV83</accession>
<feature type="chain" id="PRO_1000005123" description="Small ribosomal subunit protein bS21">
    <location>
        <begin position="1"/>
        <end position="70"/>
    </location>
</feature>
<proteinExistence type="inferred from homology"/>
<gene>
    <name evidence="1" type="primary">rpsU</name>
    <name type="ordered locus">mma_0490</name>
</gene>
<organism>
    <name type="scientific">Janthinobacterium sp. (strain Marseille)</name>
    <name type="common">Minibacterium massiliensis</name>
    <dbReference type="NCBI Taxonomy" id="375286"/>
    <lineage>
        <taxon>Bacteria</taxon>
        <taxon>Pseudomonadati</taxon>
        <taxon>Pseudomonadota</taxon>
        <taxon>Betaproteobacteria</taxon>
        <taxon>Burkholderiales</taxon>
        <taxon>Oxalobacteraceae</taxon>
        <taxon>Janthinobacterium</taxon>
    </lineage>
</organism>
<comment type="similarity">
    <text evidence="1">Belongs to the bacterial ribosomal protein bS21 family.</text>
</comment>
<protein>
    <recommendedName>
        <fullName evidence="1">Small ribosomal subunit protein bS21</fullName>
    </recommendedName>
    <alternativeName>
        <fullName evidence="2">30S ribosomal protein S21</fullName>
    </alternativeName>
</protein>
<keyword id="KW-0687">Ribonucleoprotein</keyword>
<keyword id="KW-0689">Ribosomal protein</keyword>
<sequence>MTTIRLKENEPFEVAMRRFKRTIEKTGLLTDLRAREFYEKPTAERKRKLAAAVKRHYKRIRSQQLPKKLY</sequence>
<reference key="1">
    <citation type="journal article" date="2007" name="PLoS Genet.">
        <title>Genome analysis of Minibacterium massiliensis highlights the convergent evolution of water-living bacteria.</title>
        <authorList>
            <person name="Audic S."/>
            <person name="Robert C."/>
            <person name="Campagna B."/>
            <person name="Parinello H."/>
            <person name="Claverie J.-M."/>
            <person name="Raoult D."/>
            <person name="Drancourt M."/>
        </authorList>
    </citation>
    <scope>NUCLEOTIDE SEQUENCE [LARGE SCALE GENOMIC DNA]</scope>
    <source>
        <strain>Marseille</strain>
    </source>
</reference>
<name>RS21_JANMA</name>
<dbReference type="EMBL" id="CP000269">
    <property type="protein sequence ID" value="ABR91649.1"/>
    <property type="molecule type" value="Genomic_DNA"/>
</dbReference>
<dbReference type="RefSeq" id="WP_011870001.1">
    <property type="nucleotide sequence ID" value="NC_009659.1"/>
</dbReference>
<dbReference type="SMR" id="A6SV83"/>
<dbReference type="STRING" id="375286.mma_0490"/>
<dbReference type="KEGG" id="mms:mma_0490"/>
<dbReference type="eggNOG" id="COG0828">
    <property type="taxonomic scope" value="Bacteria"/>
</dbReference>
<dbReference type="HOGENOM" id="CLU_159258_1_2_4"/>
<dbReference type="OrthoDB" id="9799244at2"/>
<dbReference type="Proteomes" id="UP000006388">
    <property type="component" value="Chromosome"/>
</dbReference>
<dbReference type="GO" id="GO:1990904">
    <property type="term" value="C:ribonucleoprotein complex"/>
    <property type="evidence" value="ECO:0007669"/>
    <property type="project" value="UniProtKB-KW"/>
</dbReference>
<dbReference type="GO" id="GO:0005840">
    <property type="term" value="C:ribosome"/>
    <property type="evidence" value="ECO:0007669"/>
    <property type="project" value="UniProtKB-KW"/>
</dbReference>
<dbReference type="GO" id="GO:0003735">
    <property type="term" value="F:structural constituent of ribosome"/>
    <property type="evidence" value="ECO:0007669"/>
    <property type="project" value="InterPro"/>
</dbReference>
<dbReference type="GO" id="GO:0006412">
    <property type="term" value="P:translation"/>
    <property type="evidence" value="ECO:0007669"/>
    <property type="project" value="UniProtKB-UniRule"/>
</dbReference>
<dbReference type="Gene3D" id="1.20.5.1150">
    <property type="entry name" value="Ribosomal protein S8"/>
    <property type="match status" value="1"/>
</dbReference>
<dbReference type="HAMAP" id="MF_00358">
    <property type="entry name" value="Ribosomal_bS21"/>
    <property type="match status" value="1"/>
</dbReference>
<dbReference type="InterPro" id="IPR001911">
    <property type="entry name" value="Ribosomal_bS21"/>
</dbReference>
<dbReference type="InterPro" id="IPR038380">
    <property type="entry name" value="Ribosomal_bS21_sf"/>
</dbReference>
<dbReference type="NCBIfam" id="TIGR00030">
    <property type="entry name" value="S21p"/>
    <property type="match status" value="1"/>
</dbReference>
<dbReference type="PANTHER" id="PTHR21109">
    <property type="entry name" value="MITOCHONDRIAL 28S RIBOSOMAL PROTEIN S21"/>
    <property type="match status" value="1"/>
</dbReference>
<dbReference type="PANTHER" id="PTHR21109:SF22">
    <property type="entry name" value="SMALL RIBOSOMAL SUBUNIT PROTEIN BS21"/>
    <property type="match status" value="1"/>
</dbReference>
<dbReference type="Pfam" id="PF01165">
    <property type="entry name" value="Ribosomal_S21"/>
    <property type="match status" value="1"/>
</dbReference>
<dbReference type="PRINTS" id="PR00976">
    <property type="entry name" value="RIBOSOMALS21"/>
</dbReference>